<evidence type="ECO:0000255" key="1">
    <source>
        <dbReference type="PROSITE-ProRule" id="PRU00750"/>
    </source>
</evidence>
<evidence type="ECO:0000303" key="2">
    <source ref="1"/>
</evidence>
<evidence type="ECO:0000305" key="3"/>
<accession>P0CL85</accession>
<accession>A6NMT8</accession>
<accession>A8K0A1</accession>
<accession>Q32NE4</accession>
<accession>Q6NXR2</accession>
<accession>Q7L5M5</accession>
<accession>Q7Z5K6</accession>
<name>ST3L3_HUMAN</name>
<feature type="chain" id="PRO_0000408000" description="STAG3-like protein 3">
    <location>
        <begin position="1"/>
        <end position="134"/>
    </location>
</feature>
<feature type="domain" description="SCD" evidence="1">
    <location>
        <begin position="10"/>
        <end position="95"/>
    </location>
</feature>
<feature type="splice variant" id="VSP_041016" description="In isoform 2." evidence="2">
    <location>
        <begin position="117"/>
        <end position="134"/>
    </location>
</feature>
<feature type="sequence conflict" description="In Ref. 1; AAP81010 and 3; AAH66937." evidence="3" ref="1 3">
    <original>C</original>
    <variation>R</variation>
    <location>
        <position position="87"/>
    </location>
</feature>
<reference key="1">
    <citation type="submission" date="2003-06" db="EMBL/GenBank/DDBJ databases">
        <title>An ARM-repeat superfamily protein acts in spermatogenesis.</title>
        <authorList>
            <person name="Xu Z.Y."/>
            <person name="Xu M."/>
            <person name="Yin L.L."/>
            <person name="Lu L."/>
            <person name="Li J.M."/>
            <person name="Zhou J.M."/>
            <person name="Sha J.H."/>
        </authorList>
    </citation>
    <scope>NUCLEOTIDE SEQUENCE [MRNA] (ISOFORM 2)</scope>
    <source>
        <tissue>Testis</tissue>
    </source>
</reference>
<reference key="2">
    <citation type="journal article" date="2003" name="Nature">
        <title>The DNA sequence of human chromosome 7.</title>
        <authorList>
            <person name="Hillier L.W."/>
            <person name="Fulton R.S."/>
            <person name="Fulton L.A."/>
            <person name="Graves T.A."/>
            <person name="Pepin K.H."/>
            <person name="Wagner-McPherson C."/>
            <person name="Layman D."/>
            <person name="Maas J."/>
            <person name="Jaeger S."/>
            <person name="Walker R."/>
            <person name="Wylie K."/>
            <person name="Sekhon M."/>
            <person name="Becker M.C."/>
            <person name="O'Laughlin M.D."/>
            <person name="Schaller M.E."/>
            <person name="Fewell G.A."/>
            <person name="Delehaunty K.D."/>
            <person name="Miner T.L."/>
            <person name="Nash W.E."/>
            <person name="Cordes M."/>
            <person name="Du H."/>
            <person name="Sun H."/>
            <person name="Edwards J."/>
            <person name="Bradshaw-Cordum H."/>
            <person name="Ali J."/>
            <person name="Andrews S."/>
            <person name="Isak A."/>
            <person name="Vanbrunt A."/>
            <person name="Nguyen C."/>
            <person name="Du F."/>
            <person name="Lamar B."/>
            <person name="Courtney L."/>
            <person name="Kalicki J."/>
            <person name="Ozersky P."/>
            <person name="Bielicki L."/>
            <person name="Scott K."/>
            <person name="Holmes A."/>
            <person name="Harkins R."/>
            <person name="Harris A."/>
            <person name="Strong C.M."/>
            <person name="Hou S."/>
            <person name="Tomlinson C."/>
            <person name="Dauphin-Kohlberg S."/>
            <person name="Kozlowicz-Reilly A."/>
            <person name="Leonard S."/>
            <person name="Rohlfing T."/>
            <person name="Rock S.M."/>
            <person name="Tin-Wollam A.-M."/>
            <person name="Abbott A."/>
            <person name="Minx P."/>
            <person name="Maupin R."/>
            <person name="Strowmatt C."/>
            <person name="Latreille P."/>
            <person name="Miller N."/>
            <person name="Johnson D."/>
            <person name="Murray J."/>
            <person name="Woessner J.P."/>
            <person name="Wendl M.C."/>
            <person name="Yang S.-P."/>
            <person name="Schultz B.R."/>
            <person name="Wallis J.W."/>
            <person name="Spieth J."/>
            <person name="Bieri T.A."/>
            <person name="Nelson J.O."/>
            <person name="Berkowicz N."/>
            <person name="Wohldmann P.E."/>
            <person name="Cook L.L."/>
            <person name="Hickenbotham M.T."/>
            <person name="Eldred J."/>
            <person name="Williams D."/>
            <person name="Bedell J.A."/>
            <person name="Mardis E.R."/>
            <person name="Clifton S.W."/>
            <person name="Chissoe S.L."/>
            <person name="Marra M.A."/>
            <person name="Raymond C."/>
            <person name="Haugen E."/>
            <person name="Gillett W."/>
            <person name="Zhou Y."/>
            <person name="James R."/>
            <person name="Phelps K."/>
            <person name="Iadanoto S."/>
            <person name="Bubb K."/>
            <person name="Simms E."/>
            <person name="Levy R."/>
            <person name="Clendenning J."/>
            <person name="Kaul R."/>
            <person name="Kent W.J."/>
            <person name="Furey T.S."/>
            <person name="Baertsch R.A."/>
            <person name="Brent M.R."/>
            <person name="Keibler E."/>
            <person name="Flicek P."/>
            <person name="Bork P."/>
            <person name="Suyama M."/>
            <person name="Bailey J.A."/>
            <person name="Portnoy M.E."/>
            <person name="Torrents D."/>
            <person name="Chinwalla A.T."/>
            <person name="Gish W.R."/>
            <person name="Eddy S.R."/>
            <person name="McPherson J.D."/>
            <person name="Olson M.V."/>
            <person name="Eichler E.E."/>
            <person name="Green E.D."/>
            <person name="Waterston R.H."/>
            <person name="Wilson R.K."/>
        </authorList>
    </citation>
    <scope>NUCLEOTIDE SEQUENCE [LARGE SCALE GENOMIC DNA]</scope>
</reference>
<reference key="3">
    <citation type="journal article" date="2004" name="Genome Res.">
        <title>The status, quality, and expansion of the NIH full-length cDNA project: the Mammalian Gene Collection (MGC).</title>
        <authorList>
            <consortium name="The MGC Project Team"/>
        </authorList>
    </citation>
    <scope>NUCLEOTIDE SEQUENCE [LARGE SCALE MRNA] (ISOFORM 1)</scope>
    <source>
        <tissue>Brain</tissue>
        <tissue>Mammary gland</tissue>
        <tissue>Testis</tissue>
    </source>
</reference>
<comment type="subcellular location">
    <subcellularLocation>
        <location evidence="1">Nucleus</location>
    </subcellularLocation>
</comment>
<comment type="alternative products">
    <event type="alternative splicing"/>
    <isoform>
        <id>P0CL85-1</id>
        <name>1</name>
        <sequence type="displayed"/>
    </isoform>
    <isoform>
        <id>P0CL85-2</id>
        <name>2</name>
        <sequence type="described" ref="VSP_041016"/>
    </isoform>
</comment>
<comment type="similarity">
    <text evidence="3">Belongs to the SCC3 family.</text>
</comment>
<gene>
    <name type="primary">STAG3L3</name>
</gene>
<organism>
    <name type="scientific">Homo sapiens</name>
    <name type="common">Human</name>
    <dbReference type="NCBI Taxonomy" id="9606"/>
    <lineage>
        <taxon>Eukaryota</taxon>
        <taxon>Metazoa</taxon>
        <taxon>Chordata</taxon>
        <taxon>Craniata</taxon>
        <taxon>Vertebrata</taxon>
        <taxon>Euteleostomi</taxon>
        <taxon>Mammalia</taxon>
        <taxon>Eutheria</taxon>
        <taxon>Euarchontoglires</taxon>
        <taxon>Primates</taxon>
        <taxon>Haplorrhini</taxon>
        <taxon>Catarrhini</taxon>
        <taxon>Hominidae</taxon>
        <taxon>Homo</taxon>
    </lineage>
</organism>
<proteinExistence type="evidence at transcript level"/>
<keyword id="KW-0025">Alternative splicing</keyword>
<keyword id="KW-0539">Nucleus</keyword>
<keyword id="KW-1185">Reference proteome</keyword>
<protein>
    <recommendedName>
        <fullName>STAG3-like protein 3</fullName>
    </recommendedName>
    <alternativeName>
        <fullName>Stromal antigen 3-like protein 3</fullName>
    </alternativeName>
</protein>
<sequence length="134" mass="15609">MIFSMLRKLPKVTCRDVLPEIRAICIEEIGCWMQSYSTSFLTDSYLKYIGWTLHDKHREVRVKCVKALKGLYGNRDLTARLELFTGCFKDWMVSMIMDREYSVAVEAVRLLILILKNMEGVLMDVDCESVYPIV</sequence>
<dbReference type="EMBL" id="AY313779">
    <property type="protein sequence ID" value="AAP81010.1"/>
    <property type="molecule type" value="mRNA"/>
</dbReference>
<dbReference type="EMBL" id="AC005488">
    <property type="status" value="NOT_ANNOTATED_CDS"/>
    <property type="molecule type" value="Genomic_DNA"/>
</dbReference>
<dbReference type="EMBL" id="BC066937">
    <property type="protein sequence ID" value="AAH66937.1"/>
    <property type="molecule type" value="mRNA"/>
</dbReference>
<dbReference type="SMR" id="P0CL85"/>
<dbReference type="IntAct" id="P0CL85">
    <property type="interactions" value="2"/>
</dbReference>
<dbReference type="iPTMnet" id="P0CL85"/>
<dbReference type="PhosphoSitePlus" id="P0CL85"/>
<dbReference type="BioMuta" id="HGNC:33845"/>
<dbReference type="DMDM" id="332321727"/>
<dbReference type="jPOST" id="P0CL85"/>
<dbReference type="MassIVE" id="P0CL85"/>
<dbReference type="PeptideAtlas" id="P0CL85"/>
<dbReference type="ProteomicsDB" id="52511">
    <molecule id="P0CL85-1"/>
</dbReference>
<dbReference type="ProteomicsDB" id="52512">
    <molecule id="P0CL85-2"/>
</dbReference>
<dbReference type="AGR" id="HGNC:33845"/>
<dbReference type="GeneCards" id="STAG3L3"/>
<dbReference type="HGNC" id="HGNC:33845">
    <property type="gene designation" value="STAG3L3"/>
</dbReference>
<dbReference type="neXtProt" id="NX_P0CL85"/>
<dbReference type="InParanoid" id="P0CL85"/>
<dbReference type="PAN-GO" id="P0CL85">
    <property type="GO annotations" value="5 GO annotations based on evolutionary models"/>
</dbReference>
<dbReference type="PathwayCommons" id="P0CL85"/>
<dbReference type="Pharos" id="P0CL85">
    <property type="development level" value="Tdark"/>
</dbReference>
<dbReference type="PRO" id="PR:P0CL85"/>
<dbReference type="Proteomes" id="UP000005640">
    <property type="component" value="Unplaced"/>
</dbReference>
<dbReference type="RNAct" id="P0CL85">
    <property type="molecule type" value="protein"/>
</dbReference>
<dbReference type="GO" id="GO:0005634">
    <property type="term" value="C:nucleus"/>
    <property type="evidence" value="ECO:0007669"/>
    <property type="project" value="UniProtKB-SubCell"/>
</dbReference>
<dbReference type="FunFam" id="1.25.10.10:FF:001129">
    <property type="entry name" value="Putative STAG3-like protein 1"/>
    <property type="match status" value="1"/>
</dbReference>
<dbReference type="Gene3D" id="1.25.10.10">
    <property type="entry name" value="Leucine-rich Repeat Variant"/>
    <property type="match status" value="1"/>
</dbReference>
<dbReference type="InterPro" id="IPR011989">
    <property type="entry name" value="ARM-like"/>
</dbReference>
<dbReference type="InterPro" id="IPR016024">
    <property type="entry name" value="ARM-type_fold"/>
</dbReference>
<dbReference type="InterPro" id="IPR039662">
    <property type="entry name" value="Cohesin_Scc3/SA"/>
</dbReference>
<dbReference type="InterPro" id="IPR020839">
    <property type="entry name" value="SCD"/>
</dbReference>
<dbReference type="PANTHER" id="PTHR11199:SF8">
    <property type="entry name" value="COHESIN SUBUNIT SA-3"/>
    <property type="match status" value="1"/>
</dbReference>
<dbReference type="PANTHER" id="PTHR11199">
    <property type="entry name" value="STROMAL ANTIGEN"/>
    <property type="match status" value="1"/>
</dbReference>
<dbReference type="Pfam" id="PF21581">
    <property type="entry name" value="SCD"/>
    <property type="match status" value="1"/>
</dbReference>
<dbReference type="SUPFAM" id="SSF48371">
    <property type="entry name" value="ARM repeat"/>
    <property type="match status" value="1"/>
</dbReference>
<dbReference type="PROSITE" id="PS51425">
    <property type="entry name" value="SCD"/>
    <property type="match status" value="1"/>
</dbReference>